<evidence type="ECO:0000250" key="1">
    <source>
        <dbReference type="UniProtKB" id="P01165"/>
    </source>
</evidence>
<evidence type="ECO:0000250" key="2">
    <source>
        <dbReference type="UniProtKB" id="P05408"/>
    </source>
</evidence>
<evidence type="ECO:0000250" key="3">
    <source>
        <dbReference type="UniProtKB" id="P12961"/>
    </source>
</evidence>
<evidence type="ECO:0000250" key="4">
    <source>
        <dbReference type="UniProtKB" id="P18844"/>
    </source>
</evidence>
<evidence type="ECO:0000305" key="5"/>
<evidence type="ECO:0007744" key="6">
    <source>
    </source>
</evidence>
<feature type="signal peptide" evidence="2">
    <location>
        <begin position="1"/>
        <end position="24"/>
    </location>
</feature>
<feature type="chain" id="PRO_0000000050" description="Neuroendocrine protein 7B2">
    <location>
        <begin position="25"/>
        <end position="210"/>
    </location>
</feature>
<feature type="chain" id="PRO_0000000051" description="N-terminal peptide" evidence="1">
    <location>
        <begin position="25"/>
        <end position="176"/>
    </location>
</feature>
<feature type="peptide" id="PRO_0000000052" description="C-terminal peptide" evidence="4">
    <location>
        <begin position="198"/>
        <end position="210"/>
    </location>
</feature>
<feature type="modified residue" description="Phosphoserine" evidence="3">
    <location>
        <position position="139"/>
    </location>
</feature>
<feature type="modified residue" description="Phosphoserine" evidence="6">
    <location>
        <position position="203"/>
    </location>
</feature>
<feature type="disulfide bond" evidence="4">
    <location>
        <begin position="118"/>
        <end position="128"/>
    </location>
</feature>
<comment type="function">
    <text>Acts as a molecular chaperone for PCSK2/PC2, preventing its premature activation in the regulated secretory pathway. Binds to inactive PCSK2 in the endoplasmic reticulum and facilitates its transport from there to later compartments of the secretory pathway where it is proteolytically matured and activated. Also required for cleavage of PCSK2 but does not appear to be involved in its folding. Plays a role in regulating pituitary hormone secretion. The C-terminal peptide inhibits PCSK2 in vitro.</text>
</comment>
<comment type="subunit">
    <text evidence="2">Interacts with PCSK2/PC2 early in the secretory pathway. Dissociation occurs at later stages.</text>
</comment>
<comment type="interaction">
    <interactant intactId="EBI-988232">
        <id>P27682</id>
    </interactant>
    <interactant intactId="EBI-988244">
        <id>P28841</id>
        <label>Pcsk2</label>
    </interactant>
    <organismsDiffer>false</organismsDiffer>
    <experiments>4</experiments>
</comment>
<comment type="subcellular location">
    <subcellularLocation>
        <location evidence="1">Secreted</location>
    </subcellularLocation>
    <text evidence="1">Neuroendocrine and endocrine secretory granules.</text>
</comment>
<comment type="PTM">
    <text evidence="3">Proteolytically cleaved in the Golgi by a furin-like convertase to generate bioactive peptides.</text>
</comment>
<comment type="PTM">
    <text evidence="3">Sulfated on tyrosine residues.</text>
</comment>
<comment type="similarity">
    <text evidence="5">Belongs to the 7B2 family.</text>
</comment>
<organism>
    <name type="scientific">Rattus norvegicus</name>
    <name type="common">Rat</name>
    <dbReference type="NCBI Taxonomy" id="10116"/>
    <lineage>
        <taxon>Eukaryota</taxon>
        <taxon>Metazoa</taxon>
        <taxon>Chordata</taxon>
        <taxon>Craniata</taxon>
        <taxon>Vertebrata</taxon>
        <taxon>Euteleostomi</taxon>
        <taxon>Mammalia</taxon>
        <taxon>Eutheria</taxon>
        <taxon>Euarchontoglires</taxon>
        <taxon>Glires</taxon>
        <taxon>Rodentia</taxon>
        <taxon>Myomorpha</taxon>
        <taxon>Muroidea</taxon>
        <taxon>Muridae</taxon>
        <taxon>Murinae</taxon>
        <taxon>Rattus</taxon>
    </lineage>
</organism>
<proteinExistence type="evidence at protein level"/>
<keyword id="KW-0143">Chaperone</keyword>
<keyword id="KW-0165">Cleavage on pair of basic residues</keyword>
<keyword id="KW-1015">Disulfide bond</keyword>
<keyword id="KW-0527">Neuropeptide</keyword>
<keyword id="KW-0597">Phosphoprotein</keyword>
<keyword id="KW-1185">Reference proteome</keyword>
<keyword id="KW-0964">Secreted</keyword>
<keyword id="KW-0732">Signal</keyword>
<keyword id="KW-0765">Sulfation</keyword>
<keyword id="KW-0813">Transport</keyword>
<accession>P27682</accession>
<gene>
    <name type="primary">Scg5</name>
    <name type="synonym">Sgne1</name>
</gene>
<protein>
    <recommendedName>
        <fullName>Neuroendocrine protein 7B2</fullName>
    </recommendedName>
    <alternativeName>
        <fullName>Secretogranin V</fullName>
    </alternativeName>
    <alternativeName>
        <fullName>Secretogranin-5</fullName>
    </alternativeName>
    <alternativeName>
        <fullName>Secretory granule endocrine protein I</fullName>
    </alternativeName>
    <component>
        <recommendedName>
            <fullName>N-terminal peptide</fullName>
        </recommendedName>
    </component>
    <component>
        <recommendedName>
            <fullName>C-terminal peptide</fullName>
        </recommendedName>
    </component>
</protein>
<name>7B2_RAT</name>
<sequence>MTSRMAILSGLLFWLLLEWNPAFAYSPRTPDRVSETDIQRLLHGVMEQLGIARPRVEYPAHQAMNLVGPQSIEGGAHEGLQHLGPFGNIPNIVAELTGDNIPKDFSEDQGYPDPPNPCPLGKTADDGCLENAPDTAEFSREFQLDQHLFDPEHDYPGLGKWNKKLLYEKMKGGQRRKRRSVNPYLQGKRLDNVVAKKSVPHFSEEEKEPE</sequence>
<reference key="1">
    <citation type="journal article" date="1991" name="Endocrinology">
        <title>Cloning and characterization of the rat complementary deoxyribonucleic acid and gene encoding the neuroendocrine peptide 7B2.</title>
        <authorList>
            <person name="Waldbieser G.C."/>
            <person name="Aimi J."/>
            <person name="Dixon J.E."/>
        </authorList>
    </citation>
    <scope>NUCLEOTIDE SEQUENCE [MRNA]</scope>
</reference>
<reference key="2">
    <citation type="journal article" date="2004" name="Genome Res.">
        <title>The status, quality, and expansion of the NIH full-length cDNA project: the Mammalian Gene Collection (MGC).</title>
        <authorList>
            <consortium name="The MGC Project Team"/>
        </authorList>
    </citation>
    <scope>NUCLEOTIDE SEQUENCE [LARGE SCALE MRNA]</scope>
    <source>
        <tissue>Pituitary anterior lobe</tissue>
    </source>
</reference>
<reference key="3">
    <citation type="journal article" date="2001" name="Biochem. J.">
        <title>Neuroendocrine secretory protein 7B2: structure, expression and functions.</title>
        <authorList>
            <person name="Mbikay M."/>
            <person name="Seidah N.G."/>
            <person name="Chretien M."/>
        </authorList>
    </citation>
    <scope>REVIEW</scope>
</reference>
<reference key="4">
    <citation type="journal article" date="2012" name="Nat. Commun.">
        <title>Quantitative maps of protein phosphorylation sites across 14 different rat organs and tissues.</title>
        <authorList>
            <person name="Lundby A."/>
            <person name="Secher A."/>
            <person name="Lage K."/>
            <person name="Nordsborg N.B."/>
            <person name="Dmytriyev A."/>
            <person name="Lundby C."/>
            <person name="Olsen J.V."/>
        </authorList>
    </citation>
    <scope>PHOSPHORYLATION [LARGE SCALE ANALYSIS] AT SER-203</scope>
    <scope>IDENTIFICATION BY MASS SPECTROMETRY [LARGE SCALE ANALYSIS]</scope>
</reference>
<dbReference type="EMBL" id="M63901">
    <property type="protein sequence ID" value="AAA40626.1"/>
    <property type="molecule type" value="mRNA"/>
</dbReference>
<dbReference type="EMBL" id="BC061560">
    <property type="protein sequence ID" value="AAH61560.1"/>
    <property type="molecule type" value="mRNA"/>
</dbReference>
<dbReference type="PIR" id="A49745">
    <property type="entry name" value="A49745"/>
</dbReference>
<dbReference type="RefSeq" id="NP_037307.1">
    <property type="nucleotide sequence ID" value="NM_013175.3"/>
</dbReference>
<dbReference type="SMR" id="P27682"/>
<dbReference type="BioGRID" id="247748">
    <property type="interactions" value="1"/>
</dbReference>
<dbReference type="FunCoup" id="P27682">
    <property type="interactions" value="1226"/>
</dbReference>
<dbReference type="IntAct" id="P27682">
    <property type="interactions" value="1"/>
</dbReference>
<dbReference type="STRING" id="10116.ENSRNOP00000010679"/>
<dbReference type="MEROPS" id="I21.001"/>
<dbReference type="iPTMnet" id="P27682"/>
<dbReference type="PhosphoSitePlus" id="P27682"/>
<dbReference type="jPOST" id="P27682"/>
<dbReference type="PaxDb" id="10116-ENSRNOP00000010679"/>
<dbReference type="GeneID" id="25719"/>
<dbReference type="KEGG" id="rno:25719"/>
<dbReference type="UCSC" id="RGD:3669">
    <property type="organism name" value="rat"/>
</dbReference>
<dbReference type="AGR" id="RGD:3669"/>
<dbReference type="CTD" id="6447"/>
<dbReference type="RGD" id="3669">
    <property type="gene designation" value="Scg5"/>
</dbReference>
<dbReference type="eggNOG" id="KOG4187">
    <property type="taxonomic scope" value="Eukaryota"/>
</dbReference>
<dbReference type="InParanoid" id="P27682"/>
<dbReference type="OrthoDB" id="9922675at2759"/>
<dbReference type="PhylomeDB" id="P27682"/>
<dbReference type="PRO" id="PR:P27682"/>
<dbReference type="Proteomes" id="UP000002494">
    <property type="component" value="Unplaced"/>
</dbReference>
<dbReference type="GO" id="GO:0005576">
    <property type="term" value="C:extracellular region"/>
    <property type="evidence" value="ECO:0007669"/>
    <property type="project" value="UniProtKB-SubCell"/>
</dbReference>
<dbReference type="GO" id="GO:0005634">
    <property type="term" value="C:nucleus"/>
    <property type="evidence" value="ECO:0000266"/>
    <property type="project" value="RGD"/>
</dbReference>
<dbReference type="GO" id="GO:0030141">
    <property type="term" value="C:secretory granule"/>
    <property type="evidence" value="ECO:0000250"/>
    <property type="project" value="UniProtKB"/>
</dbReference>
<dbReference type="GO" id="GO:0004857">
    <property type="term" value="F:enzyme inhibitor activity"/>
    <property type="evidence" value="ECO:0000250"/>
    <property type="project" value="UniProtKB"/>
</dbReference>
<dbReference type="GO" id="GO:0030234">
    <property type="term" value="F:enzyme regulator activity"/>
    <property type="evidence" value="ECO:0000318"/>
    <property type="project" value="GO_Central"/>
</dbReference>
<dbReference type="GO" id="GO:0051082">
    <property type="term" value="F:unfolded protein binding"/>
    <property type="evidence" value="ECO:0000250"/>
    <property type="project" value="UniProtKB"/>
</dbReference>
<dbReference type="GO" id="GO:0006886">
    <property type="term" value="P:intracellular protein transport"/>
    <property type="evidence" value="ECO:0000250"/>
    <property type="project" value="UniProtKB"/>
</dbReference>
<dbReference type="GO" id="GO:0007218">
    <property type="term" value="P:neuropeptide signaling pathway"/>
    <property type="evidence" value="ECO:0007669"/>
    <property type="project" value="UniProtKB-KW"/>
</dbReference>
<dbReference type="GO" id="GO:0016486">
    <property type="term" value="P:peptide hormone processing"/>
    <property type="evidence" value="ECO:0000250"/>
    <property type="project" value="UniProtKB"/>
</dbReference>
<dbReference type="GO" id="GO:0046883">
    <property type="term" value="P:regulation of hormone secretion"/>
    <property type="evidence" value="ECO:0000250"/>
    <property type="project" value="UniProtKB"/>
</dbReference>
<dbReference type="DisProt" id="DP01557"/>
<dbReference type="InterPro" id="IPR007945">
    <property type="entry name" value="Secretogranin_V"/>
</dbReference>
<dbReference type="PANTHER" id="PTHR12738">
    <property type="entry name" value="NEUROENDOCRINE PROTEIN 7B2"/>
    <property type="match status" value="1"/>
</dbReference>
<dbReference type="PANTHER" id="PTHR12738:SF0">
    <property type="entry name" value="NEUROENDOCRINE PROTEIN 7B2"/>
    <property type="match status" value="1"/>
</dbReference>
<dbReference type="Pfam" id="PF05281">
    <property type="entry name" value="Secretogranin_V"/>
    <property type="match status" value="1"/>
</dbReference>